<protein>
    <recommendedName>
        <fullName evidence="1">Glutamate racemase</fullName>
        <ecNumber evidence="1">5.1.1.3</ecNumber>
    </recommendedName>
</protein>
<sequence length="272" mass="29312">MTDAPIGIFDSGVGGLTVARAIRDQLPNESILYVGDTTHSPYGPKPIADVRRYSLEVLDLLVEQGVKLLVIACNTASSAVLRDARERYAVPVVEVIQPAVRRAVAATRTGRVGVIGTVGTIASRAYEDAFAAAPDLRLFPRACPRFVEFVETGVTSGDEVLRVAAEYLQPLRDADVDTLVLGCTHYPFLEGAISYVMGEGVSLVSSDIETAKDVYRILVSGGFERHDSAPPTVRYEATGLDAEHFLRLAHRFIGPEVSQVDLVQTGVIDLSL</sequence>
<comment type="function">
    <text evidence="1">Provides the (R)-glutamate required for cell wall biosynthesis.</text>
</comment>
<comment type="catalytic activity">
    <reaction evidence="1">
        <text>L-glutamate = D-glutamate</text>
        <dbReference type="Rhea" id="RHEA:12813"/>
        <dbReference type="ChEBI" id="CHEBI:29985"/>
        <dbReference type="ChEBI" id="CHEBI:29986"/>
        <dbReference type="EC" id="5.1.1.3"/>
    </reaction>
</comment>
<comment type="pathway">
    <text evidence="1">Cell wall biogenesis; peptidoglycan biosynthesis.</text>
</comment>
<comment type="similarity">
    <text evidence="1">Belongs to the aspartate/glutamate racemases family.</text>
</comment>
<proteinExistence type="inferred from homology"/>
<keyword id="KW-0133">Cell shape</keyword>
<keyword id="KW-0961">Cell wall biogenesis/degradation</keyword>
<keyword id="KW-0413">Isomerase</keyword>
<keyword id="KW-0573">Peptidoglycan synthesis</keyword>
<keyword id="KW-1185">Reference proteome</keyword>
<dbReference type="EC" id="5.1.1.3" evidence="1"/>
<dbReference type="EMBL" id="AE016822">
    <property type="protein sequence ID" value="AAT89188.1"/>
    <property type="molecule type" value="Genomic_DNA"/>
</dbReference>
<dbReference type="RefSeq" id="WP_011186182.1">
    <property type="nucleotide sequence ID" value="NC_006087.1"/>
</dbReference>
<dbReference type="SMR" id="Q6AEK8"/>
<dbReference type="STRING" id="281090.Lxx13590"/>
<dbReference type="KEGG" id="lxx:Lxx13590"/>
<dbReference type="eggNOG" id="COG0796">
    <property type="taxonomic scope" value="Bacteria"/>
</dbReference>
<dbReference type="HOGENOM" id="CLU_052344_0_1_11"/>
<dbReference type="UniPathway" id="UPA00219"/>
<dbReference type="Proteomes" id="UP000001306">
    <property type="component" value="Chromosome"/>
</dbReference>
<dbReference type="GO" id="GO:0008881">
    <property type="term" value="F:glutamate racemase activity"/>
    <property type="evidence" value="ECO:0007669"/>
    <property type="project" value="UniProtKB-UniRule"/>
</dbReference>
<dbReference type="GO" id="GO:0071555">
    <property type="term" value="P:cell wall organization"/>
    <property type="evidence" value="ECO:0007669"/>
    <property type="project" value="UniProtKB-KW"/>
</dbReference>
<dbReference type="GO" id="GO:0009252">
    <property type="term" value="P:peptidoglycan biosynthetic process"/>
    <property type="evidence" value="ECO:0007669"/>
    <property type="project" value="UniProtKB-UniRule"/>
</dbReference>
<dbReference type="GO" id="GO:0008360">
    <property type="term" value="P:regulation of cell shape"/>
    <property type="evidence" value="ECO:0007669"/>
    <property type="project" value="UniProtKB-KW"/>
</dbReference>
<dbReference type="FunFam" id="3.40.50.1860:FF:000002">
    <property type="entry name" value="Glutamate racemase"/>
    <property type="match status" value="1"/>
</dbReference>
<dbReference type="Gene3D" id="3.40.50.1860">
    <property type="match status" value="2"/>
</dbReference>
<dbReference type="HAMAP" id="MF_00258">
    <property type="entry name" value="Glu_racemase"/>
    <property type="match status" value="1"/>
</dbReference>
<dbReference type="InterPro" id="IPR015942">
    <property type="entry name" value="Asp/Glu/hydantoin_racemase"/>
</dbReference>
<dbReference type="InterPro" id="IPR001920">
    <property type="entry name" value="Asp/Glu_race"/>
</dbReference>
<dbReference type="InterPro" id="IPR018187">
    <property type="entry name" value="Asp/Glu_racemase_AS_1"/>
</dbReference>
<dbReference type="InterPro" id="IPR033134">
    <property type="entry name" value="Asp/Glu_racemase_AS_2"/>
</dbReference>
<dbReference type="InterPro" id="IPR004391">
    <property type="entry name" value="Glu_race"/>
</dbReference>
<dbReference type="NCBIfam" id="TIGR00067">
    <property type="entry name" value="glut_race"/>
    <property type="match status" value="1"/>
</dbReference>
<dbReference type="PANTHER" id="PTHR21198">
    <property type="entry name" value="GLUTAMATE RACEMASE"/>
    <property type="match status" value="1"/>
</dbReference>
<dbReference type="PANTHER" id="PTHR21198:SF2">
    <property type="entry name" value="GLUTAMATE RACEMASE"/>
    <property type="match status" value="1"/>
</dbReference>
<dbReference type="Pfam" id="PF01177">
    <property type="entry name" value="Asp_Glu_race"/>
    <property type="match status" value="1"/>
</dbReference>
<dbReference type="SUPFAM" id="SSF53681">
    <property type="entry name" value="Aspartate/glutamate racemase"/>
    <property type="match status" value="2"/>
</dbReference>
<dbReference type="PROSITE" id="PS00923">
    <property type="entry name" value="ASP_GLU_RACEMASE_1"/>
    <property type="match status" value="1"/>
</dbReference>
<dbReference type="PROSITE" id="PS00924">
    <property type="entry name" value="ASP_GLU_RACEMASE_2"/>
    <property type="match status" value="1"/>
</dbReference>
<accession>Q6AEK8</accession>
<gene>
    <name evidence="1" type="primary">murI</name>
    <name type="ordered locus">Lxx13590</name>
</gene>
<feature type="chain" id="PRO_0000095482" description="Glutamate racemase">
    <location>
        <begin position="1"/>
        <end position="272"/>
    </location>
</feature>
<feature type="active site" description="Proton donor/acceptor" evidence="1">
    <location>
        <position position="73"/>
    </location>
</feature>
<feature type="active site" description="Proton donor/acceptor" evidence="1">
    <location>
        <position position="183"/>
    </location>
</feature>
<feature type="binding site" evidence="1">
    <location>
        <begin position="10"/>
        <end position="11"/>
    </location>
    <ligand>
        <name>substrate</name>
    </ligand>
</feature>
<feature type="binding site" evidence="1">
    <location>
        <begin position="42"/>
        <end position="43"/>
    </location>
    <ligand>
        <name>substrate</name>
    </ligand>
</feature>
<feature type="binding site" evidence="1">
    <location>
        <begin position="74"/>
        <end position="75"/>
    </location>
    <ligand>
        <name>substrate</name>
    </ligand>
</feature>
<feature type="binding site" evidence="1">
    <location>
        <begin position="184"/>
        <end position="185"/>
    </location>
    <ligand>
        <name>substrate</name>
    </ligand>
</feature>
<reference key="1">
    <citation type="journal article" date="2004" name="Mol. Plant Microbe Interact.">
        <title>The genome sequence of the Gram-positive sugarcane pathogen Leifsonia xyli subsp. xyli.</title>
        <authorList>
            <person name="Monteiro-Vitorello C.B."/>
            <person name="Camargo L.E.A."/>
            <person name="Van Sluys M.A."/>
            <person name="Kitajima J.P."/>
            <person name="Truffi D."/>
            <person name="do Amaral A.M."/>
            <person name="Harakava R."/>
            <person name="de Oliveira J.C.F."/>
            <person name="Wood D."/>
            <person name="de Oliveira M.C."/>
            <person name="Miyaki C.Y."/>
            <person name="Takita M.A."/>
            <person name="da Silva A.C.R."/>
            <person name="Furlan L.R."/>
            <person name="Carraro D.M."/>
            <person name="Camarotte G."/>
            <person name="Almeida N.F. Jr."/>
            <person name="Carrer H."/>
            <person name="Coutinho L.L."/>
            <person name="El-Dorry H.A."/>
            <person name="Ferro M.I.T."/>
            <person name="Gagliardi P.R."/>
            <person name="Giglioti E."/>
            <person name="Goldman M.H.S."/>
            <person name="Goldman G.H."/>
            <person name="Kimura E.T."/>
            <person name="Ferro E.S."/>
            <person name="Kuramae E.E."/>
            <person name="Lemos E.G.M."/>
            <person name="Lemos M.V.F."/>
            <person name="Mauro S.M.Z."/>
            <person name="Machado M.A."/>
            <person name="Marino C.L."/>
            <person name="Menck C.F."/>
            <person name="Nunes L.R."/>
            <person name="Oliveira R.C."/>
            <person name="Pereira G.G."/>
            <person name="Siqueira W."/>
            <person name="de Souza A.A."/>
            <person name="Tsai S.M."/>
            <person name="Zanca A.S."/>
            <person name="Simpson A.J.G."/>
            <person name="Brumbley S.M."/>
            <person name="Setubal J.C."/>
        </authorList>
    </citation>
    <scope>NUCLEOTIDE SEQUENCE [LARGE SCALE GENOMIC DNA]</scope>
    <source>
        <strain>CTCB07</strain>
    </source>
</reference>
<evidence type="ECO:0000255" key="1">
    <source>
        <dbReference type="HAMAP-Rule" id="MF_00258"/>
    </source>
</evidence>
<name>MURI_LEIXX</name>
<organism>
    <name type="scientific">Leifsonia xyli subsp. xyli (strain CTCB07)</name>
    <dbReference type="NCBI Taxonomy" id="281090"/>
    <lineage>
        <taxon>Bacteria</taxon>
        <taxon>Bacillati</taxon>
        <taxon>Actinomycetota</taxon>
        <taxon>Actinomycetes</taxon>
        <taxon>Micrococcales</taxon>
        <taxon>Microbacteriaceae</taxon>
        <taxon>Leifsonia</taxon>
    </lineage>
</organism>